<feature type="chain" id="PRO_0000427596" description="Uncharacterized protein MT0519">
    <location>
        <begin position="1"/>
        <end position="291"/>
    </location>
</feature>
<feature type="domain" description="DAGKc" evidence="1">
    <location>
        <begin position="68"/>
        <end position="205"/>
    </location>
</feature>
<keyword id="KW-1185">Reference proteome</keyword>
<organism>
    <name type="scientific">Mycobacterium tuberculosis (strain CDC 1551 / Oshkosh)</name>
    <dbReference type="NCBI Taxonomy" id="83331"/>
    <lineage>
        <taxon>Bacteria</taxon>
        <taxon>Bacillati</taxon>
        <taxon>Actinomycetota</taxon>
        <taxon>Actinomycetes</taxon>
        <taxon>Mycobacteriales</taxon>
        <taxon>Mycobacteriaceae</taxon>
        <taxon>Mycobacterium</taxon>
        <taxon>Mycobacterium tuberculosis complex</taxon>
    </lineage>
</organism>
<evidence type="ECO:0000255" key="1">
    <source>
        <dbReference type="PROSITE-ProRule" id="PRU00783"/>
    </source>
</evidence>
<name>Y499_MYCTO</name>
<reference key="1">
    <citation type="journal article" date="2002" name="J. Bacteriol.">
        <title>Whole-genome comparison of Mycobacterium tuberculosis clinical and laboratory strains.</title>
        <authorList>
            <person name="Fleischmann R.D."/>
            <person name="Alland D."/>
            <person name="Eisen J.A."/>
            <person name="Carpenter L."/>
            <person name="White O."/>
            <person name="Peterson J.D."/>
            <person name="DeBoy R.T."/>
            <person name="Dodson R.J."/>
            <person name="Gwinn M.L."/>
            <person name="Haft D.H."/>
            <person name="Hickey E.K."/>
            <person name="Kolonay J.F."/>
            <person name="Nelson W.C."/>
            <person name="Umayam L.A."/>
            <person name="Ermolaeva M.D."/>
            <person name="Salzberg S.L."/>
            <person name="Delcher A."/>
            <person name="Utterback T.R."/>
            <person name="Weidman J.F."/>
            <person name="Khouri H.M."/>
            <person name="Gill J."/>
            <person name="Mikula A."/>
            <person name="Bishai W."/>
            <person name="Jacobs W.R. Jr."/>
            <person name="Venter J.C."/>
            <person name="Fraser C.M."/>
        </authorList>
    </citation>
    <scope>NUCLEOTIDE SEQUENCE [LARGE SCALE GENOMIC DNA]</scope>
    <source>
        <strain>CDC 1551 / Oshkosh</strain>
    </source>
</reference>
<gene>
    <name type="ordered locus">MT0519</name>
</gene>
<proteinExistence type="predicted"/>
<dbReference type="EMBL" id="AE000516">
    <property type="protein sequence ID" value="AAK44742.1"/>
    <property type="molecule type" value="Genomic_DNA"/>
</dbReference>
<dbReference type="PIR" id="F70745">
    <property type="entry name" value="F70745"/>
</dbReference>
<dbReference type="RefSeq" id="WP_003402433.1">
    <property type="nucleotide sequence ID" value="NZ_KK341227.1"/>
</dbReference>
<dbReference type="SMR" id="P9WKT8"/>
<dbReference type="KEGG" id="mtc:MT0519"/>
<dbReference type="PATRIC" id="fig|83331.31.peg.549"/>
<dbReference type="HOGENOM" id="CLU_068888_0_0_11"/>
<dbReference type="Proteomes" id="UP000001020">
    <property type="component" value="Chromosome"/>
</dbReference>
<dbReference type="GO" id="GO:0016301">
    <property type="term" value="F:kinase activity"/>
    <property type="evidence" value="ECO:0007669"/>
    <property type="project" value="InterPro"/>
</dbReference>
<dbReference type="Gene3D" id="2.40.160.210">
    <property type="entry name" value="Acyl-CoA thioesterase, double hotdog domain"/>
    <property type="match status" value="1"/>
</dbReference>
<dbReference type="InterPro" id="IPR049450">
    <property type="entry name" value="ACOT8-like_C"/>
</dbReference>
<dbReference type="InterPro" id="IPR042171">
    <property type="entry name" value="Acyl-CoA_hotdog"/>
</dbReference>
<dbReference type="InterPro" id="IPR001206">
    <property type="entry name" value="Diacylglycerol_kinase_cat_dom"/>
</dbReference>
<dbReference type="InterPro" id="IPR029069">
    <property type="entry name" value="HotDog_dom_sf"/>
</dbReference>
<dbReference type="InterPro" id="IPR052389">
    <property type="entry name" value="Sec_Metab_Biosynth-Assoc"/>
</dbReference>
<dbReference type="InterPro" id="IPR049449">
    <property type="entry name" value="TesB_ACOT8-like_N"/>
</dbReference>
<dbReference type="PANTHER" id="PTHR38110">
    <property type="entry name" value="CHROMOSOME 23, WHOLE GENOME SHOTGUN SEQUENCE"/>
    <property type="match status" value="1"/>
</dbReference>
<dbReference type="PANTHER" id="PTHR38110:SF1">
    <property type="entry name" value="THIOESTERASE DOMAIN-CONTAINING PROTEIN"/>
    <property type="match status" value="1"/>
</dbReference>
<dbReference type="Pfam" id="PF13622">
    <property type="entry name" value="4HBT_3"/>
    <property type="match status" value="1"/>
</dbReference>
<dbReference type="Pfam" id="PF20789">
    <property type="entry name" value="4HBT_3C"/>
    <property type="match status" value="1"/>
</dbReference>
<dbReference type="SMART" id="SM00046">
    <property type="entry name" value="DAGKc"/>
    <property type="match status" value="1"/>
</dbReference>
<dbReference type="SUPFAM" id="SSF54637">
    <property type="entry name" value="Thioesterase/thiol ester dehydrase-isomerase"/>
    <property type="match status" value="2"/>
</dbReference>
<dbReference type="PROSITE" id="PS50146">
    <property type="entry name" value="DAGK"/>
    <property type="match status" value="1"/>
</dbReference>
<sequence>MNALFTTAMALRPLDSDPGNPACRVFEGELNEHWTIGPKVHGGAMVALCANAARTAYGAAGQQPMRQPVAVSASFLWAPDPGTMRLVTSIRKRGRRISVADVELTQGGRTAVHAVVTLGEPEHFLPGVDGSGGASGTAPLLSANPVVELMAPEPPEGVVPIGPGHQLAGLVHLGEGCDVRPVLSTLRSATDGRPPVIQLWARPRGVAPDALFALLCGDLSAPVTFAVDRTGWAPTVALTAYLRALPADGWLRVLCTCVEIGQDWFDEDHIVVDRLGRIVVQTRQLAMVPAQ</sequence>
<accession>P9WKT8</accession>
<accession>L0T5J6</accession>
<accession>P64719</accession>
<accession>Q11164</accession>
<protein>
    <recommendedName>
        <fullName>Uncharacterized protein MT0519</fullName>
    </recommendedName>
</protein>